<keyword id="KW-0025">Alternative splicing</keyword>
<keyword id="KW-0084">Basement membrane</keyword>
<keyword id="KW-0217">Developmental protein</keyword>
<keyword id="KW-0903">Direct protein sequencing</keyword>
<keyword id="KW-1015">Disulfide bond</keyword>
<keyword id="KW-0272">Extracellular matrix</keyword>
<keyword id="KW-0325">Glycoprotein</keyword>
<keyword id="KW-0393">Immunoglobulin domain</keyword>
<keyword id="KW-0646">Protease inhibitor</keyword>
<keyword id="KW-0654">Proteoglycan</keyword>
<keyword id="KW-1185">Reference proteome</keyword>
<keyword id="KW-0677">Repeat</keyword>
<keyword id="KW-0964">Secreted</keyword>
<keyword id="KW-0722">Serine protease inhibitor</keyword>
<keyword id="KW-0732">Signal</keyword>
<keyword id="KW-0765">Sulfation</keyword>
<sequence>MDLSRRLCSTALVAFIVLASIHDSQSRFPGLRQKRQYGANMYLPESSVTPGGEGNDPDEWTPWSSPSDCSRTCGGGVSYQTRECLRRDDRGEAVCSGGSRRYFSCNTQDCPEEESDFRAQQCSRFDRQQFDGVFYEWVPYTNAPNPCELNCMPKGERFYYRQREKVVDGTRCNDKDLDVCVNGECMPVGCDMMLGSDAKEDKCRKCGGDGSTCKTIRNTITTKDLAPGYNDLLLLPEGATNIRIEETVPSSNYLACRNHSGHYYLNGDWRIDFPRPMFFANSWWNYQRKPMGFAAPDQLTCSGPISESLFIVMLVQEKNISLDYEYSIPESLSHSQQDTHTWTHHQFNACSASCGGGSQSRKVTCNNRITLAEVNPSLCDQKSKPVEEQACGTEPCAPHWVEGEWSKCSKGCGSDGFQNRSITCERISSSGEHTVEEDAVCLKEVGNKPATKQECNRDVKNCPKYHLGPWTPCDKLCGDGKQTRKVTCFIEENGHKRVLPEEDCVEEKPETEKSCLLTPCEGVDWIISQWSGCNACGQNTETRTAICGNKEGKVYPEEFCEPEVPTLSRPCKSPKCEAQWFSSEWSKCSAPCGKGVKSRIVICGEFDGKTVTPADDDSKCNKETKPESEQDCEGEEKVCPGEWFTGPWGKCSKPCGGGERVREVLCLSNGTKSVNCDEEKVEPLSEKCNSEACTEDEILPLTSTDKPIEDDEEDCDEDGIELISDGLSDDEKSEDVIDLEGTAKTETTPEAEDLMQSDSPTPYDEFESTGTTFEGSGYDSESTTDSGISTEGSGDDEETSEASTDLSSSTDSGSTSSDSTSSDSSSSISSDATSEAPASSVSDSSDSTDASTETTGVSDDSTDVSSSTEASASESTDVSGASDSTGSTNASDSTPESSTEASSSTDDSTDSSDNSSNVSESSTEASSSSVSDSNDSSDGSTDGVSSTTENSSDSTSDATSDSTASSDSTDSTSDQTTETTPESSTDSTESSTLDASSTTDASSTSESSSESSTDGSSTTSNSASSETTGLSSDGSTTDATTAASDNTDITTDGSTDESTDGSSNASTEGSTEGASEDTTISTESSGSTESTDAIASDGSTTEGSTVEDLSSSTSSDVTSDSTITDSSPSTEVSGSTDSSSSTDGSSTDASSTEASSTDVTESTDSTVSGGTSDTTESGPTEESTTEGSTESTTEGSTDSTQSTDLDSTTSDIWSTSDKDDESESSTPYSFDSEVTKSKPRKCKPKKSTCAKSEYGCCPDGKSTPKGPFDEGCPIAKTCADTKYGCCLDGVSPAKGKNNKGCPKSQCAETLFGCCPDKFTAADGENDEGCPETTTVPPTTTTEETQPETTTEIEGSGQDSTTSEPDTKKSCSFSEFGCCPDAETSAKGPDFEGCGLASPVAKGCAESENGCCPDGQTPASGPNGEGCSGCTRERFGCCPDSQTPAHGPNKEGCCLDTQFGCCPDNILAARGPNNEGCECHYTPYGCCPDNKSAATGYNQEGCACETTQYGCCPDKITAAKGPKHEGCPCETTQFGCCPDGLTFAKGPHHHGCHCTQTEFKCCDDEKTPAKGPNGDGCTCVESKFGCCPDGVTKATDEKFGGCENVQEPPQKACGLPKETGTCNNYSVKYYFDTSYGGCARFWYGGCDGNDNRFESEAECKDTCQDYTGKHVCLLPKSAGPCTGFTKKWYFDVDRNRCEEFQYGGCYGTNNRFDSLEQCQGTCAASENLPTCEQPVESGPCAGNFERWYYDNETDICRPFTYGGCKGNKNNYPTEHACNYNCRQPGVLKDRCALPKQTGDCSEKLAKWHFSESEKRCVPFYYSGCGGNKNNFPTLESCEDHCPRQVAKDICEIPAEVGECANYVTSWYYDTQDQACRQFYYGGCGGNENRFPTEESCLARCDRKPEPTTTTPATRPQPSRQDVCDEEPAPGECSTWVLKWHFDRKIGACRQFYYGNCGGNGNRFETENDCQQRCLSQEPPAPTPPRAPAPTRQPDPAPTVAQCSQPADPGQCDKWALHWNYNETEGRCQSFYYGGCGGNDNRFATEEECSARCSVNIDIRIGADPVEHDTSKCFLAFEPGNCYNNVTRWFYNSAEGLCDEFVYTGCGGNANNYATEEECQNECNDAQTTCALPPVRGRCSDLSRRWYFDERSGECHEFEFTGCRGNRNNFVSQSDCLNFCIGEPVVEPSAPTYSVCAEPPEAGECDNRTTAWFYDSENMACTAFTYTGCGGNGNRFETRDQCERQCGEFKGVDVCNEPVTTGPCTDWQTKYYFNTASQACEPFTYGGCDGTGNRFSDLFECQTVCLAGREPRVGSAKEICLLPVATGRCNGPSVHERRWYYDDEAGNCVSFIYAGCSGNQNNFRSFEACTNQCRPEPNKQDNEIGQNPCDTFDAECQELRCPYGVRRVAARSQPECTQCICENPCEGYSCPEGQQCAIDVASSDDRQFAPVCRDIYKPGECPALSANASGCARECYTDADCRGDNKCCSDGCGQLCVHPARPTQPPRTQAPVVSYPGDARAALEPKEAHELDVQTAIGGIAVLRCFATGNPAPNITWSLKNLVINTNKGRYVLTANGDLTIVQVRQTDDGTYVCVASNGLGEPVRREVALQVTEPVSQPAYIYGDKNVTQIVELNRPAVIRCPAGGFPEPHVSWWRNGQMFGLKNNLMARDYSLVFNSIQLSDLGLYTCEVYNQRRPVSLRVTLKAVGPVRPLSPEEEQYMQYVLNPATRPVTQRPSYPYRPTRPAYVPEPTVNVHAVLALEPKNSYTPGSTIVMSCSVQGYPEPNVTWIKDDVPLYNNERVQITYQPHRLVLSDVTSADSGKYTCRASNAYTYANGEANVSIQSVVPVSPECVDNPYFANCKLIVKGRYCSNPYYTQFCCRSCTLAGQVASPPLHPNAV</sequence>
<feature type="signal peptide" evidence="8">
    <location>
        <begin position="1"/>
        <end position="26"/>
    </location>
</feature>
<feature type="chain" id="PRO_0000248544" description="Papilin">
    <location>
        <begin position="27"/>
        <end position="2898"/>
    </location>
</feature>
<feature type="domain" description="TSP type-1 1" evidence="4">
    <location>
        <begin position="57"/>
        <end position="111"/>
    </location>
</feature>
<feature type="domain" description="TSP type-1 2" evidence="4">
    <location>
        <begin position="338"/>
        <end position="397"/>
    </location>
</feature>
<feature type="domain" description="TSP type-1 3" evidence="4">
    <location>
        <begin position="461"/>
        <end position="521"/>
    </location>
</feature>
<feature type="domain" description="TSP type-1 4" evidence="4">
    <location>
        <begin position="522"/>
        <end position="575"/>
    </location>
</feature>
<feature type="domain" description="TSP type-1 5" evidence="4">
    <location>
        <begin position="576"/>
        <end position="633"/>
    </location>
</feature>
<feature type="domain" description="TSP type-1 6" evidence="4">
    <location>
        <begin position="639"/>
        <end position="694"/>
    </location>
</feature>
<feature type="domain" description="BPTI/Kunitz inhibitor 1" evidence="3">
    <location>
        <begin position="1612"/>
        <end position="1662"/>
    </location>
</feature>
<feature type="domain" description="BPTI/Kunitz inhibitor 2" evidence="3">
    <location>
        <begin position="1671"/>
        <end position="1721"/>
    </location>
</feature>
<feature type="domain" description="BPTI/Kunitz inhibitor 3" evidence="3">
    <location>
        <begin position="1730"/>
        <end position="1780"/>
    </location>
</feature>
<feature type="domain" description="BPTI/Kunitz inhibitor 4" evidence="3">
    <location>
        <begin position="1790"/>
        <end position="1840"/>
    </location>
</feature>
<feature type="domain" description="BPTI/Kunitz inhibitor 5" evidence="3">
    <location>
        <begin position="1849"/>
        <end position="1899"/>
    </location>
</feature>
<feature type="domain" description="BPTI/Kunitz inhibitor 6" evidence="3">
    <location>
        <begin position="1922"/>
        <end position="1972"/>
    </location>
</feature>
<feature type="domain" description="BPTI/Kunitz inhibitor 7" evidence="3">
    <location>
        <begin position="2001"/>
        <end position="2051"/>
    </location>
</feature>
<feature type="domain" description="BPTI/Kunitz inhibitor 8" evidence="3">
    <location>
        <begin position="2071"/>
        <end position="2121"/>
    </location>
</feature>
<feature type="domain" description="BPTI/Kunitz inhibitor 9" evidence="3">
    <location>
        <begin position="2128"/>
        <end position="2178"/>
    </location>
</feature>
<feature type="domain" description="BPTI/Kunitz inhibitor 10" evidence="3">
    <location>
        <begin position="2194"/>
        <end position="2244"/>
    </location>
</feature>
<feature type="domain" description="BPTI/Kunitz inhibitor 11" evidence="3">
    <location>
        <begin position="2253"/>
        <end position="2303"/>
    </location>
</feature>
<feature type="domain" description="BPTI/Kunitz inhibitor 12" evidence="3">
    <location>
        <begin position="2318"/>
        <end position="2371"/>
    </location>
</feature>
<feature type="domain" description="WAP" evidence="6">
    <location>
        <begin position="2452"/>
        <end position="2498"/>
    </location>
</feature>
<feature type="domain" description="Ig-like C2-type 1">
    <location>
        <begin position="2523"/>
        <end position="2607"/>
    </location>
</feature>
<feature type="domain" description="Ig-like C2-type 2">
    <location>
        <begin position="2617"/>
        <end position="2697"/>
    </location>
</feature>
<feature type="domain" description="Ig-like C2-type 3">
    <location>
        <begin position="2749"/>
        <end position="2840"/>
    </location>
</feature>
<feature type="domain" description="PLAC" evidence="5">
    <location>
        <begin position="2847"/>
        <end position="2886"/>
    </location>
</feature>
<feature type="region of interest" description="Disordered" evidence="7">
    <location>
        <begin position="43"/>
        <end position="67"/>
    </location>
</feature>
<feature type="region of interest" description="Disordered" evidence="7">
    <location>
        <begin position="699"/>
        <end position="1252"/>
    </location>
</feature>
<feature type="region of interest" description="Disordered" evidence="7">
    <location>
        <begin position="1323"/>
        <end position="1367"/>
    </location>
</feature>
<feature type="region of interest" description="Disordered" evidence="7">
    <location>
        <begin position="1902"/>
        <end position="1928"/>
    </location>
</feature>
<feature type="region of interest" description="Disordered" evidence="7">
    <location>
        <begin position="1972"/>
        <end position="2004"/>
    </location>
</feature>
<feature type="compositionally biased region" description="Acidic residues" evidence="7">
    <location>
        <begin position="708"/>
        <end position="720"/>
    </location>
</feature>
<feature type="compositionally biased region" description="Acidic residues" evidence="7">
    <location>
        <begin position="727"/>
        <end position="738"/>
    </location>
</feature>
<feature type="compositionally biased region" description="Polar residues" evidence="7">
    <location>
        <begin position="768"/>
        <end position="788"/>
    </location>
</feature>
<feature type="compositionally biased region" description="Low complexity" evidence="7">
    <location>
        <begin position="801"/>
        <end position="879"/>
    </location>
</feature>
<feature type="compositionally biased region" description="Low complexity" evidence="7">
    <location>
        <begin position="890"/>
        <end position="1053"/>
    </location>
</feature>
<feature type="compositionally biased region" description="Polar residues" evidence="7">
    <location>
        <begin position="1064"/>
        <end position="1073"/>
    </location>
</feature>
<feature type="compositionally biased region" description="Low complexity" evidence="7">
    <location>
        <begin position="1076"/>
        <end position="1091"/>
    </location>
</feature>
<feature type="compositionally biased region" description="Low complexity" evidence="7">
    <location>
        <begin position="1104"/>
        <end position="1215"/>
    </location>
</feature>
<feature type="compositionally biased region" description="Basic residues" evidence="7">
    <location>
        <begin position="1237"/>
        <end position="1248"/>
    </location>
</feature>
<feature type="compositionally biased region" description="Low complexity" evidence="7">
    <location>
        <begin position="1330"/>
        <end position="1351"/>
    </location>
</feature>
<feature type="compositionally biased region" description="Low complexity" evidence="7">
    <location>
        <begin position="1905"/>
        <end position="1916"/>
    </location>
</feature>
<feature type="compositionally biased region" description="Pro residues" evidence="7">
    <location>
        <begin position="1977"/>
        <end position="1995"/>
    </location>
</feature>
<feature type="glycosylation site" description="N-linked (GlcNAc...) asparagine" evidence="2">
    <location>
        <position position="258"/>
    </location>
</feature>
<feature type="glycosylation site" description="N-linked (GlcNAc...) asparagine" evidence="2">
    <location>
        <position position="319"/>
    </location>
</feature>
<feature type="glycosylation site" description="N-linked (GlcNAc...) asparagine" evidence="2">
    <location>
        <position position="419"/>
    </location>
</feature>
<feature type="glycosylation site" description="N-linked (GlcNAc...) asparagine" evidence="10">
    <location>
        <position position="669"/>
    </location>
</feature>
<feature type="glycosylation site" description="N-linked (GlcNAc...) asparagine" evidence="2">
    <location>
        <position position="889"/>
    </location>
</feature>
<feature type="glycosylation site" description="N-linked (GlcNAc...) asparagine" evidence="2">
    <location>
        <position position="914"/>
    </location>
</feature>
<feature type="glycosylation site" description="N-linked (GlcNAc...) asparagine" evidence="2">
    <location>
        <position position="917"/>
    </location>
</feature>
<feature type="glycosylation site" description="N-linked (GlcNAc...) asparagine" evidence="2">
    <location>
        <position position="950"/>
    </location>
</feature>
<feature type="glycosylation site" description="N-linked (GlcNAc...) asparagine" evidence="2">
    <location>
        <position position="1064"/>
    </location>
</feature>
<feature type="glycosylation site" description="N-linked (GlcNAc...) asparagine" evidence="2">
    <location>
        <position position="1489"/>
    </location>
</feature>
<feature type="glycosylation site" description="N-linked (GlcNAc...) asparagine" evidence="2">
    <location>
        <position position="1623"/>
    </location>
</feature>
<feature type="glycosylation site" description="N-linked (GlcNAc...) asparagine" evidence="2">
    <location>
        <position position="1750"/>
    </location>
</feature>
<feature type="glycosylation site" description="N-linked (GlcNAc...) asparagine" evidence="2">
    <location>
        <position position="2020"/>
    </location>
</feature>
<feature type="glycosylation site" description="N-linked (GlcNAc...) asparagine" evidence="2">
    <location>
        <position position="2083"/>
    </location>
</feature>
<feature type="glycosylation site" description="N-linked (GlcNAc...) asparagine" evidence="2">
    <location>
        <position position="2205"/>
    </location>
</feature>
<feature type="glycosylation site" description="N-linked (GlcNAc...) asparagine" evidence="2">
    <location>
        <position position="2465"/>
    </location>
</feature>
<feature type="glycosylation site" description="N-linked (GlcNAc...) asparagine" evidence="2">
    <location>
        <position position="2552"/>
    </location>
</feature>
<feature type="glycosylation site" description="N-linked (GlcNAc...) asparagine" evidence="2">
    <location>
        <position position="2625"/>
    </location>
</feature>
<feature type="glycosylation site" description="N-linked (GlcNAc...) asparagine" evidence="2">
    <location>
        <position position="2784"/>
    </location>
</feature>
<feature type="glycosylation site" description="N-linked (GlcNAc...) asparagine" evidence="2">
    <location>
        <position position="2838"/>
    </location>
</feature>
<feature type="disulfide bond" evidence="1">
    <location>
        <begin position="69"/>
        <end position="105"/>
    </location>
</feature>
<feature type="disulfide bond" evidence="1">
    <location>
        <begin position="73"/>
        <end position="110"/>
    </location>
</feature>
<feature type="disulfide bond" evidence="1">
    <location>
        <begin position="84"/>
        <end position="95"/>
    </location>
</feature>
<feature type="disulfide bond" evidence="1">
    <location>
        <begin position="462"/>
        <end position="504"/>
    </location>
</feature>
<feature type="disulfide bond" evidence="1">
    <location>
        <begin position="473"/>
        <end position="515"/>
    </location>
</feature>
<feature type="disulfide bond" evidence="1">
    <location>
        <begin position="477"/>
        <end position="520"/>
    </location>
</feature>
<feature type="disulfide bond" evidence="1">
    <location>
        <begin position="1612"/>
        <end position="1662"/>
    </location>
</feature>
<feature type="disulfide bond" evidence="1">
    <location>
        <begin position="1621"/>
        <end position="1645"/>
    </location>
</feature>
<feature type="disulfide bond" evidence="1">
    <location>
        <begin position="1637"/>
        <end position="1658"/>
    </location>
</feature>
<feature type="disulfide bond" evidence="1">
    <location>
        <begin position="1671"/>
        <end position="1721"/>
    </location>
</feature>
<feature type="disulfide bond" evidence="1">
    <location>
        <begin position="1680"/>
        <end position="1704"/>
    </location>
</feature>
<feature type="disulfide bond" evidence="1">
    <location>
        <begin position="1696"/>
        <end position="1717"/>
    </location>
</feature>
<feature type="disulfide bond" evidence="1">
    <location>
        <begin position="1730"/>
        <end position="1780"/>
    </location>
</feature>
<feature type="disulfide bond" evidence="1">
    <location>
        <begin position="1739"/>
        <end position="1763"/>
    </location>
</feature>
<feature type="disulfide bond" evidence="1">
    <location>
        <begin position="1755"/>
        <end position="1776"/>
    </location>
</feature>
<feature type="disulfide bond" evidence="1">
    <location>
        <begin position="1790"/>
        <end position="1840"/>
    </location>
</feature>
<feature type="disulfide bond" evidence="1">
    <location>
        <begin position="1799"/>
        <end position="1823"/>
    </location>
</feature>
<feature type="disulfide bond" evidence="1">
    <location>
        <begin position="1815"/>
        <end position="1836"/>
    </location>
</feature>
<feature type="disulfide bond" evidence="1">
    <location>
        <begin position="1849"/>
        <end position="1899"/>
    </location>
</feature>
<feature type="disulfide bond" evidence="1">
    <location>
        <begin position="1858"/>
        <end position="1882"/>
    </location>
</feature>
<feature type="disulfide bond" evidence="1">
    <location>
        <begin position="1874"/>
        <end position="1895"/>
    </location>
</feature>
<feature type="disulfide bond" evidence="1">
    <location>
        <begin position="1922"/>
        <end position="1972"/>
    </location>
</feature>
<feature type="disulfide bond" evidence="1">
    <location>
        <begin position="1931"/>
        <end position="1955"/>
    </location>
</feature>
<feature type="disulfide bond" evidence="1">
    <location>
        <begin position="1947"/>
        <end position="1968"/>
    </location>
</feature>
<feature type="disulfide bond" evidence="1">
    <location>
        <begin position="2001"/>
        <end position="2051"/>
    </location>
</feature>
<feature type="disulfide bond" evidence="1">
    <location>
        <begin position="2010"/>
        <end position="2034"/>
    </location>
</feature>
<feature type="disulfide bond" evidence="1">
    <location>
        <begin position="2026"/>
        <end position="2047"/>
    </location>
</feature>
<feature type="disulfide bond" evidence="1">
    <location>
        <begin position="2071"/>
        <end position="2121"/>
    </location>
</feature>
<feature type="disulfide bond" evidence="1">
    <location>
        <begin position="2080"/>
        <end position="2104"/>
    </location>
</feature>
<feature type="disulfide bond" evidence="1">
    <location>
        <begin position="2096"/>
        <end position="2117"/>
    </location>
</feature>
<feature type="disulfide bond" evidence="1">
    <location>
        <begin position="2128"/>
        <end position="2178"/>
    </location>
</feature>
<feature type="disulfide bond" evidence="1">
    <location>
        <begin position="2137"/>
        <end position="2161"/>
    </location>
</feature>
<feature type="disulfide bond" evidence="1">
    <location>
        <begin position="2153"/>
        <end position="2174"/>
    </location>
</feature>
<feature type="disulfide bond" evidence="1">
    <location>
        <begin position="2194"/>
        <end position="2244"/>
    </location>
</feature>
<feature type="disulfide bond" evidence="1">
    <location>
        <begin position="2203"/>
        <end position="2227"/>
    </location>
</feature>
<feature type="disulfide bond" evidence="1">
    <location>
        <begin position="2219"/>
        <end position="2240"/>
    </location>
</feature>
<feature type="disulfide bond" evidence="1">
    <location>
        <begin position="2253"/>
        <end position="2303"/>
    </location>
</feature>
<feature type="disulfide bond" evidence="1">
    <location>
        <begin position="2262"/>
        <end position="2286"/>
    </location>
</feature>
<feature type="disulfide bond" evidence="1">
    <location>
        <begin position="2278"/>
        <end position="2299"/>
    </location>
</feature>
<feature type="disulfide bond" evidence="1">
    <location>
        <begin position="2318"/>
        <end position="2371"/>
    </location>
</feature>
<feature type="disulfide bond" evidence="1">
    <location>
        <begin position="2327"/>
        <end position="2354"/>
    </location>
</feature>
<feature type="disulfide bond" evidence="1">
    <location>
        <begin position="2346"/>
        <end position="2367"/>
    </location>
</feature>
<feature type="disulfide bond" evidence="1">
    <location>
        <begin position="2543"/>
        <end position="2592"/>
    </location>
</feature>
<feature type="disulfide bond" evidence="1">
    <location>
        <begin position="2640"/>
        <end position="2687"/>
    </location>
</feature>
<feature type="disulfide bond" evidence="1">
    <location>
        <begin position="2775"/>
        <end position="2824"/>
    </location>
</feature>
<feature type="splice variant" id="VSP_041751" description="In isoform C." evidence="12">
    <location>
        <begin position="1788"/>
        <end position="2372"/>
    </location>
</feature>
<feature type="splice variant" id="VSP_041750" description="In isoform G." evidence="15">
    <location>
        <begin position="1788"/>
        <end position="1844"/>
    </location>
</feature>
<feature type="splice variant" id="VSP_020304" description="In isoform F." evidence="13 14">
    <original>DVCNEPVTTGPCTDWQTKYYFNTASQACEPFTYGGCDGTGNRFSDLFECQTVCLAGREPRVGSAKEICLLPVATGRCNGPSVHERRWYYDDEAGNCVSFIYAGCSGNQNNFRSFEACTNQCRP</original>
    <variation>A</variation>
    <location>
        <begin position="2251"/>
        <end position="2373"/>
    </location>
</feature>
<feature type="splice variant" id="VSP_041752" description="In isoform C." evidence="12">
    <original>P</original>
    <variation>A</variation>
    <location>
        <position position="2373"/>
    </location>
</feature>
<feature type="splice variant" id="VSP_041753" description="In isoform C." evidence="12">
    <location>
        <begin position="2612"/>
        <end position="2750"/>
    </location>
</feature>
<feature type="sequence conflict" description="In Ref. 1; AAG37995 and 2; AAO84907/AAO84908." evidence="15" ref="1 2">
    <original>D</original>
    <variation>N</variation>
    <location>
        <position position="224"/>
    </location>
</feature>
<feature type="sequence conflict" description="In Ref. 1; AAG37995 and 2; AAO84907/AAO84908." evidence="15" ref="1 2">
    <original>S</original>
    <variation>N</variation>
    <location>
        <position position="360"/>
    </location>
</feature>
<feature type="sequence conflict" description="In Ref. 1; AAG37995 and 2; AAO84907/AAO84908." evidence="15" ref="1 2">
    <original>T</original>
    <variation>P</variation>
    <location>
        <position position="852"/>
    </location>
</feature>
<feature type="sequence conflict" description="In Ref. 1; AAG37995 and 2; AAO84907/AAO84908." evidence="15" ref="1 2">
    <original>N</original>
    <variation>S</variation>
    <location>
        <position position="934"/>
    </location>
</feature>
<feature type="sequence conflict" description="In Ref. 1; AAG37995 and 2; AAO84907/AAO84908." evidence="15" ref="1 2">
    <original>G</original>
    <variation>W</variation>
    <location>
        <position position="1029"/>
    </location>
</feature>
<feature type="sequence conflict" description="In Ref. 1; AAG37995 and 2; AAO84907/AAO84908." evidence="15" ref="1 2">
    <original>T</original>
    <variation>S</variation>
    <location>
        <position position="1344"/>
    </location>
</feature>
<feature type="sequence conflict" description="In Ref. 1; AAG37995 and 2; AAO84907/AAO84908." evidence="15" ref="1 2">
    <original>G</original>
    <variation>S</variation>
    <location>
        <position position="1484"/>
    </location>
</feature>
<feature type="sequence conflict" description="In Ref. 1; AAG37995 and 2; AAO84907/AAO84908." evidence="15" ref="1 2">
    <original>D</original>
    <variation>E</variation>
    <location>
        <position position="1574"/>
    </location>
</feature>
<feature type="sequence conflict" description="In Ref. 1; AAG37995." evidence="15" ref="1">
    <original>K</original>
    <variation>R</variation>
    <location>
        <position position="2566"/>
    </location>
</feature>
<feature type="sequence conflict" description="In Ref. 2; AAO84907/AAO84908." evidence="15" ref="2">
    <original>S</original>
    <variation>R</variation>
    <location>
        <position position="2764"/>
    </location>
</feature>
<feature type="sequence conflict" description="In Ref. 1; AAG37995." evidence="15" ref="1">
    <original>I</original>
    <variation>T</variation>
    <location>
        <position position="2788"/>
    </location>
</feature>
<feature type="sequence conflict" description="In Ref. 2; AAO84907/AAO84908." evidence="15" ref="2">
    <original>L</original>
    <variation>V</variation>
    <location>
        <position position="2811"/>
    </location>
</feature>
<name>PPN_DROME</name>
<accession>Q868Z9</accession>
<accession>E1JJ05</accession>
<accession>E1JJ06</accession>
<accession>Q6NP04</accession>
<accession>Q7KRX2</accession>
<accession>Q869A0</accession>
<accession>Q9GQR0</accession>
<accession>Q9VAV3</accession>
<accession>Q9VAV4</accession>
<organism>
    <name type="scientific">Drosophila melanogaster</name>
    <name type="common">Fruit fly</name>
    <dbReference type="NCBI Taxonomy" id="7227"/>
    <lineage>
        <taxon>Eukaryota</taxon>
        <taxon>Metazoa</taxon>
        <taxon>Ecdysozoa</taxon>
        <taxon>Arthropoda</taxon>
        <taxon>Hexapoda</taxon>
        <taxon>Insecta</taxon>
        <taxon>Pterygota</taxon>
        <taxon>Neoptera</taxon>
        <taxon>Endopterygota</taxon>
        <taxon>Diptera</taxon>
        <taxon>Brachycera</taxon>
        <taxon>Muscomorpha</taxon>
        <taxon>Ephydroidea</taxon>
        <taxon>Drosophilidae</taxon>
        <taxon>Drosophila</taxon>
        <taxon>Sophophora</taxon>
    </lineage>
</organism>
<protein>
    <recommendedName>
        <fullName>Papilin</fullName>
    </recommendedName>
</protein>
<reference key="1">
    <citation type="journal article" date="2000" name="Development">
        <title>Papilin in development; a pericellular protein with a homology to the ADAMTS metalloproteinases.</title>
        <authorList>
            <person name="Kramerova I.A."/>
            <person name="Kawaguchi N."/>
            <person name="Fessler L.I."/>
            <person name="Nelson R.E."/>
            <person name="Chen Y."/>
            <person name="Kramerov A.A."/>
            <person name="Kusche-Gullberg M."/>
            <person name="Kramer J.M."/>
            <person name="Ackley B.D."/>
            <person name="Sieron A.L."/>
            <person name="Prockop D.J."/>
            <person name="Fessler J.H."/>
        </authorList>
    </citation>
    <scope>NUCLEOTIDE SEQUENCE [MRNA] (ISOFORM C)</scope>
    <scope>PROTEIN SEQUENCE OF 27-39; 224-244; 554-572; 696-700 AND 2410-2443</scope>
    <scope>FUNCTION</scope>
    <scope>SUBCELLULAR LOCATION</scope>
    <scope>TISSUE SPECIFICITY</scope>
    <scope>DEVELOPMENTAL STAGE</scope>
</reference>
<reference key="2">
    <citation type="journal article" date="2003" name="Dev. Dyn.">
        <title>Alternative splicing of papilin and the diversity of Drosophila extracellular matrix during embryonic morphogenesis.</title>
        <authorList>
            <person name="Kramerova I.A."/>
            <person name="Kramerov A.A."/>
            <person name="Fessler J.H."/>
        </authorList>
    </citation>
    <scope>NUCLEOTIDE SEQUENCE [MRNA] (ISOFORMS E AND F)</scope>
    <scope>TISSUE SPECIFICITY</scope>
</reference>
<reference key="3">
    <citation type="journal article" date="2000" name="Science">
        <title>The genome sequence of Drosophila melanogaster.</title>
        <authorList>
            <person name="Adams M.D."/>
            <person name="Celniker S.E."/>
            <person name="Holt R.A."/>
            <person name="Evans C.A."/>
            <person name="Gocayne J.D."/>
            <person name="Amanatides P.G."/>
            <person name="Scherer S.E."/>
            <person name="Li P.W."/>
            <person name="Hoskins R.A."/>
            <person name="Galle R.F."/>
            <person name="George R.A."/>
            <person name="Lewis S.E."/>
            <person name="Richards S."/>
            <person name="Ashburner M."/>
            <person name="Henderson S.N."/>
            <person name="Sutton G.G."/>
            <person name="Wortman J.R."/>
            <person name="Yandell M.D."/>
            <person name="Zhang Q."/>
            <person name="Chen L.X."/>
            <person name="Brandon R.C."/>
            <person name="Rogers Y.-H.C."/>
            <person name="Blazej R.G."/>
            <person name="Champe M."/>
            <person name="Pfeiffer B.D."/>
            <person name="Wan K.H."/>
            <person name="Doyle C."/>
            <person name="Baxter E.G."/>
            <person name="Helt G."/>
            <person name="Nelson C.R."/>
            <person name="Miklos G.L.G."/>
            <person name="Abril J.F."/>
            <person name="Agbayani A."/>
            <person name="An H.-J."/>
            <person name="Andrews-Pfannkoch C."/>
            <person name="Baldwin D."/>
            <person name="Ballew R.M."/>
            <person name="Basu A."/>
            <person name="Baxendale J."/>
            <person name="Bayraktaroglu L."/>
            <person name="Beasley E.M."/>
            <person name="Beeson K.Y."/>
            <person name="Benos P.V."/>
            <person name="Berman B.P."/>
            <person name="Bhandari D."/>
            <person name="Bolshakov S."/>
            <person name="Borkova D."/>
            <person name="Botchan M.R."/>
            <person name="Bouck J."/>
            <person name="Brokstein P."/>
            <person name="Brottier P."/>
            <person name="Burtis K.C."/>
            <person name="Busam D.A."/>
            <person name="Butler H."/>
            <person name="Cadieu E."/>
            <person name="Center A."/>
            <person name="Chandra I."/>
            <person name="Cherry J.M."/>
            <person name="Cawley S."/>
            <person name="Dahlke C."/>
            <person name="Davenport L.B."/>
            <person name="Davies P."/>
            <person name="de Pablos B."/>
            <person name="Delcher A."/>
            <person name="Deng Z."/>
            <person name="Mays A.D."/>
            <person name="Dew I."/>
            <person name="Dietz S.M."/>
            <person name="Dodson K."/>
            <person name="Doup L.E."/>
            <person name="Downes M."/>
            <person name="Dugan-Rocha S."/>
            <person name="Dunkov B.C."/>
            <person name="Dunn P."/>
            <person name="Durbin K.J."/>
            <person name="Evangelista C.C."/>
            <person name="Ferraz C."/>
            <person name="Ferriera S."/>
            <person name="Fleischmann W."/>
            <person name="Fosler C."/>
            <person name="Gabrielian A.E."/>
            <person name="Garg N.S."/>
            <person name="Gelbart W.M."/>
            <person name="Glasser K."/>
            <person name="Glodek A."/>
            <person name="Gong F."/>
            <person name="Gorrell J.H."/>
            <person name="Gu Z."/>
            <person name="Guan P."/>
            <person name="Harris M."/>
            <person name="Harris N.L."/>
            <person name="Harvey D.A."/>
            <person name="Heiman T.J."/>
            <person name="Hernandez J.R."/>
            <person name="Houck J."/>
            <person name="Hostin D."/>
            <person name="Houston K.A."/>
            <person name="Howland T.J."/>
            <person name="Wei M.-H."/>
            <person name="Ibegwam C."/>
            <person name="Jalali M."/>
            <person name="Kalush F."/>
            <person name="Karpen G.H."/>
            <person name="Ke Z."/>
            <person name="Kennison J.A."/>
            <person name="Ketchum K.A."/>
            <person name="Kimmel B.E."/>
            <person name="Kodira C.D."/>
            <person name="Kraft C.L."/>
            <person name="Kravitz S."/>
            <person name="Kulp D."/>
            <person name="Lai Z."/>
            <person name="Lasko P."/>
            <person name="Lei Y."/>
            <person name="Levitsky A.A."/>
            <person name="Li J.H."/>
            <person name="Li Z."/>
            <person name="Liang Y."/>
            <person name="Lin X."/>
            <person name="Liu X."/>
            <person name="Mattei B."/>
            <person name="McIntosh T.C."/>
            <person name="McLeod M.P."/>
            <person name="McPherson D."/>
            <person name="Merkulov G."/>
            <person name="Milshina N.V."/>
            <person name="Mobarry C."/>
            <person name="Morris J."/>
            <person name="Moshrefi A."/>
            <person name="Mount S.M."/>
            <person name="Moy M."/>
            <person name="Murphy B."/>
            <person name="Murphy L."/>
            <person name="Muzny D.M."/>
            <person name="Nelson D.L."/>
            <person name="Nelson D.R."/>
            <person name="Nelson K.A."/>
            <person name="Nixon K."/>
            <person name="Nusskern D.R."/>
            <person name="Pacleb J.M."/>
            <person name="Palazzolo M."/>
            <person name="Pittman G.S."/>
            <person name="Pan S."/>
            <person name="Pollard J."/>
            <person name="Puri V."/>
            <person name="Reese M.G."/>
            <person name="Reinert K."/>
            <person name="Remington K."/>
            <person name="Saunders R.D.C."/>
            <person name="Scheeler F."/>
            <person name="Shen H."/>
            <person name="Shue B.C."/>
            <person name="Siden-Kiamos I."/>
            <person name="Simpson M."/>
            <person name="Skupski M.P."/>
            <person name="Smith T.J."/>
            <person name="Spier E."/>
            <person name="Spradling A.C."/>
            <person name="Stapleton M."/>
            <person name="Strong R."/>
            <person name="Sun E."/>
            <person name="Svirskas R."/>
            <person name="Tector C."/>
            <person name="Turner R."/>
            <person name="Venter E."/>
            <person name="Wang A.H."/>
            <person name="Wang X."/>
            <person name="Wang Z.-Y."/>
            <person name="Wassarman D.A."/>
            <person name="Weinstock G.M."/>
            <person name="Weissenbach J."/>
            <person name="Williams S.M."/>
            <person name="Woodage T."/>
            <person name="Worley K.C."/>
            <person name="Wu D."/>
            <person name="Yang S."/>
            <person name="Yao Q.A."/>
            <person name="Ye J."/>
            <person name="Yeh R.-F."/>
            <person name="Zaveri J.S."/>
            <person name="Zhan M."/>
            <person name="Zhang G."/>
            <person name="Zhao Q."/>
            <person name="Zheng L."/>
            <person name="Zheng X.H."/>
            <person name="Zhong F.N."/>
            <person name="Zhong W."/>
            <person name="Zhou X."/>
            <person name="Zhu S.C."/>
            <person name="Zhu X."/>
            <person name="Smith H.O."/>
            <person name="Gibbs R.A."/>
            <person name="Myers E.W."/>
            <person name="Rubin G.M."/>
            <person name="Venter J.C."/>
        </authorList>
    </citation>
    <scope>NUCLEOTIDE SEQUENCE [LARGE SCALE GENOMIC DNA]</scope>
    <source>
        <strain>Berkeley</strain>
    </source>
</reference>
<reference key="4">
    <citation type="journal article" date="2002" name="Genome Biol.">
        <title>Annotation of the Drosophila melanogaster euchromatic genome: a systematic review.</title>
        <authorList>
            <person name="Misra S."/>
            <person name="Crosby M.A."/>
            <person name="Mungall C.J."/>
            <person name="Matthews B.B."/>
            <person name="Campbell K.S."/>
            <person name="Hradecky P."/>
            <person name="Huang Y."/>
            <person name="Kaminker J.S."/>
            <person name="Millburn G.H."/>
            <person name="Prochnik S.E."/>
            <person name="Smith C.D."/>
            <person name="Tupy J.L."/>
            <person name="Whitfield E.J."/>
            <person name="Bayraktaroglu L."/>
            <person name="Berman B.P."/>
            <person name="Bettencourt B.R."/>
            <person name="Celniker S.E."/>
            <person name="de Grey A.D.N.J."/>
            <person name="Drysdale R.A."/>
            <person name="Harris N.L."/>
            <person name="Richter J."/>
            <person name="Russo S."/>
            <person name="Schroeder A.J."/>
            <person name="Shu S.Q."/>
            <person name="Stapleton M."/>
            <person name="Yamada C."/>
            <person name="Ashburner M."/>
            <person name="Gelbart W.M."/>
            <person name="Rubin G.M."/>
            <person name="Lewis S.E."/>
        </authorList>
    </citation>
    <scope>GENOME REANNOTATION</scope>
    <scope>ALTERNATIVE SPLICING</scope>
    <source>
        <strain>Berkeley</strain>
    </source>
</reference>
<reference key="5">
    <citation type="submission" date="2003-12" db="EMBL/GenBank/DDBJ databases">
        <authorList>
            <person name="Stapleton M."/>
            <person name="Brokstein P."/>
            <person name="Hong L."/>
            <person name="Agbayani A."/>
            <person name="Carlson J.W."/>
            <person name="Champe M."/>
            <person name="Chavez C."/>
            <person name="Dorsett V."/>
            <person name="Dresnek D."/>
            <person name="Farfan D."/>
            <person name="Frise E."/>
            <person name="George R.A."/>
            <person name="Gonzalez M."/>
            <person name="Guarin H."/>
            <person name="Kronmiller B."/>
            <person name="Li P.W."/>
            <person name="Liao G."/>
            <person name="Miranda A."/>
            <person name="Mungall C.J."/>
            <person name="Nunoo J."/>
            <person name="Pacleb J.M."/>
            <person name="Paragas V."/>
            <person name="Park S."/>
            <person name="Patel S."/>
            <person name="Phouanenavong S."/>
            <person name="Wan K.H."/>
            <person name="Yu C."/>
            <person name="Lewis S.E."/>
            <person name="Rubin G.M."/>
            <person name="Celniker S.E."/>
        </authorList>
    </citation>
    <scope>NUCLEOTIDE SEQUENCE [LARGE SCALE MRNA] OF 2186-2898 (ISOFORM F)</scope>
    <source>
        <strain>Berkeley</strain>
        <tissue>Embryo</tissue>
    </source>
</reference>
<reference key="6">
    <citation type="journal article" date="1987" name="J. Biol. Chem.">
        <title>Papilin: a Drosophila proteoglycan-like sulfated glycoprotein from basement membranes.</title>
        <authorList>
            <person name="Campbell A.G."/>
            <person name="Fessler L.I."/>
            <person name="Salo T."/>
            <person name="Fessler J.H."/>
        </authorList>
    </citation>
    <scope>SUBCELLULAR LOCATION</scope>
    <scope>SUBUNIT</scope>
    <scope>SULFATION</scope>
    <scope>GLYCOSYLATION</scope>
</reference>
<reference key="7">
    <citation type="journal article" date="2007" name="Glycobiology">
        <title>Identification of N-glycosylated proteins from the central nervous system of Drosophila melanogaster.</title>
        <authorList>
            <person name="Koles K."/>
            <person name="Lim J.-M."/>
            <person name="Aoki K."/>
            <person name="Porterfield M."/>
            <person name="Tiemeyer M."/>
            <person name="Wells L."/>
            <person name="Panin V."/>
        </authorList>
    </citation>
    <scope>GLYCOSYLATION [LARGE SCALE ANALYSIS] AT ASN-669</scope>
    <scope>IDENTIFICATION BY MASS SPECTROMETRY</scope>
    <source>
        <strain>Oregon-R</strain>
        <tissue>Head</tissue>
    </source>
</reference>
<comment type="function">
    <text evidence="8">Essential extracellular matrix (ECM) protein that influences cell rearrangements. May act by modulating metalloproteinases action during organogenesis. Able to non-competitively inhibit procollagen N-proteinase, an ADAMTS metalloproteinase.</text>
</comment>
<comment type="subunit">
    <text evidence="11">Homooligomer; disulfide-linked.</text>
</comment>
<comment type="subcellular location">
    <subcellularLocation>
        <location evidence="8 11">Secreted</location>
        <location evidence="8 11">Extracellular space</location>
        <location evidence="8 11">Extracellular matrix</location>
        <location evidence="8 11">Basement membrane</location>
    </subcellularLocation>
</comment>
<comment type="alternative products">
    <event type="alternative splicing"/>
    <isoform>
        <id>Q868Z9-1</id>
        <name>E</name>
        <name>Papilin-3</name>
        <sequence type="displayed"/>
    </isoform>
    <isoform>
        <id>Q868Z9-2</id>
        <name>F</name>
        <name>Papilin-2</name>
        <sequence type="described" ref="VSP_020304"/>
    </isoform>
    <isoform>
        <id>Q868Z9-5</id>
        <name>C</name>
        <name>Papilin-1</name>
        <sequence type="described" ref="VSP_041751 VSP_041752 VSP_041753"/>
    </isoform>
    <isoform>
        <id>Q868Z9-6</id>
        <name>G</name>
        <sequence type="described" ref="VSP_041750"/>
    </isoform>
</comment>
<comment type="tissue specificity">
    <text evidence="8 9">During embryogenesis it first appears in the extracellular matrix during gastrulation and early mesoderm development at sites where basement membranes do not subsequently form. Later, migrating hemocytes prominently produce it together with other ECM components, in basement membranes that underlie epithelia and envelop muscles and emerging organs. At various life stages, it can be synthesized by other cells, such as those of the fat body, and it also occurs in a few, circumscribed regions of relatively amorphous ECM. Isoform E is specifically expressed in ECM of heart and proventriculus. Isoform C is a major component of transitory ECM deposit in the early embryo. Isoform F is a major component of the basement membrane during embryogenesis.</text>
</comment>
<comment type="developmental stage">
    <text evidence="8">Expressed throughout development and is prominent in adult basement membranes. Appears after 4 hours of embryogenesis, peaks at 8-12 hours and remains thereafter.</text>
</comment>
<comment type="PTM">
    <text evidence="10 11">N-glycosylated.</text>
</comment>
<comment type="PTM">
    <text evidence="11">Sulfated.</text>
</comment>
<comment type="similarity">
    <text evidence="15">Belongs to the papilin family.</text>
</comment>
<gene>
    <name type="primary">Ppn</name>
    <name type="ORF">CG33103</name>
</gene>
<dbReference type="EMBL" id="AF205357">
    <property type="protein sequence ID" value="AAG37995.1"/>
    <property type="molecule type" value="mRNA"/>
</dbReference>
<dbReference type="EMBL" id="AF529179">
    <property type="protein sequence ID" value="AAO84907.1"/>
    <property type="molecule type" value="mRNA"/>
</dbReference>
<dbReference type="EMBL" id="AF529180">
    <property type="protein sequence ID" value="AAO84908.1"/>
    <property type="molecule type" value="mRNA"/>
</dbReference>
<dbReference type="EMBL" id="AE014297">
    <property type="protein sequence ID" value="AAF56794.4"/>
    <property type="molecule type" value="Genomic_DNA"/>
</dbReference>
<dbReference type="EMBL" id="AE014297">
    <property type="protein sequence ID" value="AAF56795.4"/>
    <property type="molecule type" value="Genomic_DNA"/>
</dbReference>
<dbReference type="EMBL" id="AE014297">
    <property type="protein sequence ID" value="ACZ95054.1"/>
    <property type="molecule type" value="Genomic_DNA"/>
</dbReference>
<dbReference type="EMBL" id="AE014297">
    <property type="protein sequence ID" value="ACZ95055.1"/>
    <property type="molecule type" value="Genomic_DNA"/>
</dbReference>
<dbReference type="EMBL" id="BT011127">
    <property type="protein sequence ID" value="AAR82794.1"/>
    <property type="molecule type" value="mRNA"/>
</dbReference>
<dbReference type="RefSeq" id="NP_001163760.1">
    <molecule id="Q868Z9-5"/>
    <property type="nucleotide sequence ID" value="NM_001170289.2"/>
</dbReference>
<dbReference type="RefSeq" id="NP_001163761.1">
    <molecule id="Q868Z9-6"/>
    <property type="nucleotide sequence ID" value="NM_001170290.2"/>
</dbReference>
<dbReference type="RefSeq" id="NP_788751.2">
    <molecule id="Q868Z9-2"/>
    <property type="nucleotide sequence ID" value="NM_176574.3"/>
</dbReference>
<dbReference type="RefSeq" id="NP_788752.2">
    <molecule id="Q868Z9-1"/>
    <property type="nucleotide sequence ID" value="NM_176575.3"/>
</dbReference>
<dbReference type="SMR" id="Q868Z9"/>
<dbReference type="BioGRID" id="68683">
    <property type="interactions" value="26"/>
</dbReference>
<dbReference type="FunCoup" id="Q868Z9">
    <property type="interactions" value="19"/>
</dbReference>
<dbReference type="IntAct" id="Q868Z9">
    <property type="interactions" value="4"/>
</dbReference>
<dbReference type="STRING" id="7227.FBpp0291051"/>
<dbReference type="MEROPS" id="I02.955"/>
<dbReference type="MEROPS" id="I02.964"/>
<dbReference type="MEROPS" id="I02.968"/>
<dbReference type="MEROPS" id="I02.978"/>
<dbReference type="GlyCosmos" id="Q868Z9">
    <property type="glycosylation" value="20 sites, No reported glycans"/>
</dbReference>
<dbReference type="GlyGen" id="Q868Z9">
    <property type="glycosylation" value="25 sites, 1 O-linked glycan (1 site)"/>
</dbReference>
<dbReference type="iPTMnet" id="Q868Z9"/>
<dbReference type="PaxDb" id="7227-FBpp0291051"/>
<dbReference type="EnsemblMetazoa" id="FBtr0300337">
    <molecule id="Q868Z9-5"/>
    <property type="protein sequence ID" value="FBpp0289566"/>
    <property type="gene ID" value="FBgn0003137"/>
</dbReference>
<dbReference type="EnsemblMetazoa" id="FBtr0301837">
    <molecule id="Q868Z9-1"/>
    <property type="protein sequence ID" value="FBpp0291051"/>
    <property type="gene ID" value="FBgn0003137"/>
</dbReference>
<dbReference type="EnsemblMetazoa" id="FBtr0301838">
    <molecule id="Q868Z9-2"/>
    <property type="protein sequence ID" value="FBpp0291052"/>
    <property type="gene ID" value="FBgn0003137"/>
</dbReference>
<dbReference type="EnsemblMetazoa" id="FBtr0301839">
    <molecule id="Q868Z9-6"/>
    <property type="protein sequence ID" value="FBpp0291053"/>
    <property type="gene ID" value="FBgn0003137"/>
</dbReference>
<dbReference type="GeneID" id="43872"/>
<dbReference type="KEGG" id="dme:Dmel_CG33103"/>
<dbReference type="UCSC" id="CG33103-RA">
    <molecule id="Q868Z9-1"/>
    <property type="organism name" value="d. melanogaster"/>
</dbReference>
<dbReference type="AGR" id="FB:FBgn0003137"/>
<dbReference type="CTD" id="43872"/>
<dbReference type="FlyBase" id="FBgn0003137">
    <property type="gene designation" value="Ppn"/>
</dbReference>
<dbReference type="VEuPathDB" id="VectorBase:FBgn0003137"/>
<dbReference type="eggNOG" id="KOG1217">
    <property type="taxonomic scope" value="Eukaryota"/>
</dbReference>
<dbReference type="eggNOG" id="KOG4295">
    <property type="taxonomic scope" value="Eukaryota"/>
</dbReference>
<dbReference type="eggNOG" id="KOG4475">
    <property type="taxonomic scope" value="Eukaryota"/>
</dbReference>
<dbReference type="eggNOG" id="KOG4597">
    <property type="taxonomic scope" value="Eukaryota"/>
</dbReference>
<dbReference type="GeneTree" id="ENSGT00940000171211"/>
<dbReference type="InParanoid" id="Q868Z9"/>
<dbReference type="OMA" id="IVMLVQD"/>
<dbReference type="OrthoDB" id="5950222at2759"/>
<dbReference type="PhylomeDB" id="Q868Z9"/>
<dbReference type="SignaLink" id="Q868Z9"/>
<dbReference type="BioGRID-ORCS" id="43872">
    <property type="hits" value="0 hits in 1 CRISPR screen"/>
</dbReference>
<dbReference type="GenomeRNAi" id="43872"/>
<dbReference type="PRO" id="PR:Q868Z9"/>
<dbReference type="Proteomes" id="UP000000803">
    <property type="component" value="Chromosome 3R"/>
</dbReference>
<dbReference type="Bgee" id="FBgn0003137">
    <property type="expression patterns" value="Expressed in hemocyte (sensu Nematoda and Protostomia) in imaginal disc-derived wing and 113 other cell types or tissues"/>
</dbReference>
<dbReference type="ExpressionAtlas" id="Q868Z9">
    <property type="expression patterns" value="baseline and differential"/>
</dbReference>
<dbReference type="GO" id="GO:0005604">
    <property type="term" value="C:basement membrane"/>
    <property type="evidence" value="ECO:0000314"/>
    <property type="project" value="UniProtKB"/>
</dbReference>
<dbReference type="GO" id="GO:0005576">
    <property type="term" value="C:extracellular region"/>
    <property type="evidence" value="ECO:0007669"/>
    <property type="project" value="UniProtKB-KW"/>
</dbReference>
<dbReference type="GO" id="GO:0005201">
    <property type="term" value="F:extracellular matrix structural constituent"/>
    <property type="evidence" value="ECO:0000315"/>
    <property type="project" value="UniProtKB"/>
</dbReference>
<dbReference type="GO" id="GO:0004867">
    <property type="term" value="F:serine-type endopeptidase inhibitor activity"/>
    <property type="evidence" value="ECO:0007669"/>
    <property type="project" value="UniProtKB-KW"/>
</dbReference>
<dbReference type="GO" id="GO:0030198">
    <property type="term" value="P:extracellular matrix organization"/>
    <property type="evidence" value="ECO:0000315"/>
    <property type="project" value="UniProtKB"/>
</dbReference>
<dbReference type="CDD" id="cd00096">
    <property type="entry name" value="Ig"/>
    <property type="match status" value="1"/>
</dbReference>
<dbReference type="CDD" id="cd00109">
    <property type="entry name" value="Kunitz-type"/>
    <property type="match status" value="8"/>
</dbReference>
<dbReference type="CDD" id="cd22639">
    <property type="entry name" value="Kunitz_papilin_lacunin-like"/>
    <property type="match status" value="1"/>
</dbReference>
<dbReference type="CDD" id="cd22637">
    <property type="entry name" value="Kunitz_papilin_mig6-like"/>
    <property type="match status" value="3"/>
</dbReference>
<dbReference type="CDD" id="cd00199">
    <property type="entry name" value="WAP"/>
    <property type="match status" value="1"/>
</dbReference>
<dbReference type="FunFam" id="2.60.120.830:FF:000001">
    <property type="entry name" value="A disintegrin and metalloproteinase with thrombospondin motifs 1"/>
    <property type="match status" value="1"/>
</dbReference>
<dbReference type="FunFam" id="2.20.100.10:FF:000005">
    <property type="entry name" value="ADAM metallopeptidase with thrombospondin type 1 motif 9"/>
    <property type="match status" value="1"/>
</dbReference>
<dbReference type="FunFam" id="4.10.410.10:FF:000020">
    <property type="entry name" value="Collagen, type VI, alpha 3"/>
    <property type="match status" value="4"/>
</dbReference>
<dbReference type="FunFam" id="2.60.40.10:FF:003484">
    <property type="entry name" value="MIP27932p"/>
    <property type="match status" value="1"/>
</dbReference>
<dbReference type="FunFam" id="4.10.410.10:FF:000017">
    <property type="entry name" value="papilin isoform X2"/>
    <property type="match status" value="3"/>
</dbReference>
<dbReference type="FunFam" id="4.10.410.10:FF:000055">
    <property type="entry name" value="Uncharacterized protein, isoform C"/>
    <property type="match status" value="1"/>
</dbReference>
<dbReference type="Gene3D" id="2.60.120.830">
    <property type="match status" value="1"/>
</dbReference>
<dbReference type="Gene3D" id="2.60.40.10">
    <property type="entry name" value="Immunoglobulins"/>
    <property type="match status" value="3"/>
</dbReference>
<dbReference type="Gene3D" id="4.10.410.10">
    <property type="entry name" value="Pancreatic trypsin inhibitor Kunitz domain"/>
    <property type="match status" value="12"/>
</dbReference>
<dbReference type="Gene3D" id="2.20.100.10">
    <property type="entry name" value="Thrombospondin type-1 (TSP1) repeat"/>
    <property type="match status" value="5"/>
</dbReference>
<dbReference type="InterPro" id="IPR013273">
    <property type="entry name" value="ADAMTS/ADAMTS-like"/>
</dbReference>
<dbReference type="InterPro" id="IPR010294">
    <property type="entry name" value="ADAMTS_spacer1"/>
</dbReference>
<dbReference type="InterPro" id="IPR036645">
    <property type="entry name" value="Elafin-like_sf"/>
</dbReference>
<dbReference type="InterPro" id="IPR007110">
    <property type="entry name" value="Ig-like_dom"/>
</dbReference>
<dbReference type="InterPro" id="IPR036179">
    <property type="entry name" value="Ig-like_dom_sf"/>
</dbReference>
<dbReference type="InterPro" id="IPR013783">
    <property type="entry name" value="Ig-like_fold"/>
</dbReference>
<dbReference type="InterPro" id="IPR013098">
    <property type="entry name" value="Ig_I-set"/>
</dbReference>
<dbReference type="InterPro" id="IPR003599">
    <property type="entry name" value="Ig_sub"/>
</dbReference>
<dbReference type="InterPro" id="IPR003598">
    <property type="entry name" value="Ig_sub2"/>
</dbReference>
<dbReference type="InterPro" id="IPR002223">
    <property type="entry name" value="Kunitz_BPTI"/>
</dbReference>
<dbReference type="InterPro" id="IPR036880">
    <property type="entry name" value="Kunitz_BPTI_sf"/>
</dbReference>
<dbReference type="InterPro" id="IPR010909">
    <property type="entry name" value="PLAC"/>
</dbReference>
<dbReference type="InterPro" id="IPR020901">
    <property type="entry name" value="Prtase_inh_Kunz-CS"/>
</dbReference>
<dbReference type="InterPro" id="IPR000884">
    <property type="entry name" value="TSP1_rpt"/>
</dbReference>
<dbReference type="InterPro" id="IPR036383">
    <property type="entry name" value="TSP1_rpt_sf"/>
</dbReference>
<dbReference type="InterPro" id="IPR008197">
    <property type="entry name" value="WAP_dom"/>
</dbReference>
<dbReference type="PANTHER" id="PTHR45938">
    <property type="entry name" value="ACP24A4-RELATED"/>
    <property type="match status" value="1"/>
</dbReference>
<dbReference type="PANTHER" id="PTHR45938:SF11">
    <property type="entry name" value="WAP, KAZAL, IMMUNOGLOBULIN, KUNITZ AND NTR DOMAIN-CONTAINING PROTEIN 2-LIKE"/>
    <property type="match status" value="1"/>
</dbReference>
<dbReference type="Pfam" id="PF05986">
    <property type="entry name" value="ADAMTS_spacer1"/>
    <property type="match status" value="1"/>
</dbReference>
<dbReference type="Pfam" id="PF07679">
    <property type="entry name" value="I-set"/>
    <property type="match status" value="1"/>
</dbReference>
<dbReference type="Pfam" id="PF13927">
    <property type="entry name" value="Ig_3"/>
    <property type="match status" value="2"/>
</dbReference>
<dbReference type="Pfam" id="PF00014">
    <property type="entry name" value="Kunitz_BPTI"/>
    <property type="match status" value="12"/>
</dbReference>
<dbReference type="Pfam" id="PF08686">
    <property type="entry name" value="PLAC"/>
    <property type="match status" value="1"/>
</dbReference>
<dbReference type="Pfam" id="PF19030">
    <property type="entry name" value="TSP1_ADAMTS"/>
    <property type="match status" value="5"/>
</dbReference>
<dbReference type="Pfam" id="PF00090">
    <property type="entry name" value="TSP_1"/>
    <property type="match status" value="1"/>
</dbReference>
<dbReference type="PRINTS" id="PR01857">
    <property type="entry name" value="ADAMTSFAMILY"/>
</dbReference>
<dbReference type="PRINTS" id="PR00759">
    <property type="entry name" value="BASICPTASE"/>
</dbReference>
<dbReference type="SMART" id="SM00409">
    <property type="entry name" value="IG"/>
    <property type="match status" value="3"/>
</dbReference>
<dbReference type="SMART" id="SM00408">
    <property type="entry name" value="IGc2"/>
    <property type="match status" value="3"/>
</dbReference>
<dbReference type="SMART" id="SM00131">
    <property type="entry name" value="KU"/>
    <property type="match status" value="12"/>
</dbReference>
<dbReference type="SMART" id="SM00209">
    <property type="entry name" value="TSP1"/>
    <property type="match status" value="7"/>
</dbReference>
<dbReference type="SMART" id="SM00217">
    <property type="entry name" value="WAP"/>
    <property type="match status" value="1"/>
</dbReference>
<dbReference type="SUPFAM" id="SSF57362">
    <property type="entry name" value="BPTI-like"/>
    <property type="match status" value="12"/>
</dbReference>
<dbReference type="SUPFAM" id="SSF57256">
    <property type="entry name" value="Elafin-like"/>
    <property type="match status" value="1"/>
</dbReference>
<dbReference type="SUPFAM" id="SSF48726">
    <property type="entry name" value="Immunoglobulin"/>
    <property type="match status" value="3"/>
</dbReference>
<dbReference type="SUPFAM" id="SSF82895">
    <property type="entry name" value="TSP-1 type 1 repeat"/>
    <property type="match status" value="7"/>
</dbReference>
<dbReference type="PROSITE" id="PS00280">
    <property type="entry name" value="BPTI_KUNITZ_1"/>
    <property type="match status" value="11"/>
</dbReference>
<dbReference type="PROSITE" id="PS50279">
    <property type="entry name" value="BPTI_KUNITZ_2"/>
    <property type="match status" value="12"/>
</dbReference>
<dbReference type="PROSITE" id="PS50835">
    <property type="entry name" value="IG_LIKE"/>
    <property type="match status" value="3"/>
</dbReference>
<dbReference type="PROSITE" id="PS50900">
    <property type="entry name" value="PLAC"/>
    <property type="match status" value="1"/>
</dbReference>
<dbReference type="PROSITE" id="PS50092">
    <property type="entry name" value="TSP1"/>
    <property type="match status" value="5"/>
</dbReference>
<dbReference type="PROSITE" id="PS51390">
    <property type="entry name" value="WAP"/>
    <property type="match status" value="1"/>
</dbReference>
<evidence type="ECO:0000250" key="1"/>
<evidence type="ECO:0000255" key="2"/>
<evidence type="ECO:0000255" key="3">
    <source>
        <dbReference type="PROSITE-ProRule" id="PRU00031"/>
    </source>
</evidence>
<evidence type="ECO:0000255" key="4">
    <source>
        <dbReference type="PROSITE-ProRule" id="PRU00210"/>
    </source>
</evidence>
<evidence type="ECO:0000255" key="5">
    <source>
        <dbReference type="PROSITE-ProRule" id="PRU00233"/>
    </source>
</evidence>
<evidence type="ECO:0000255" key="6">
    <source>
        <dbReference type="PROSITE-ProRule" id="PRU00722"/>
    </source>
</evidence>
<evidence type="ECO:0000256" key="7">
    <source>
        <dbReference type="SAM" id="MobiDB-lite"/>
    </source>
</evidence>
<evidence type="ECO:0000269" key="8">
    <source>
    </source>
</evidence>
<evidence type="ECO:0000269" key="9">
    <source>
    </source>
</evidence>
<evidence type="ECO:0000269" key="10">
    <source>
    </source>
</evidence>
<evidence type="ECO:0000269" key="11">
    <source>
    </source>
</evidence>
<evidence type="ECO:0000303" key="12">
    <source>
    </source>
</evidence>
<evidence type="ECO:0000303" key="13">
    <source>
    </source>
</evidence>
<evidence type="ECO:0000303" key="14">
    <source ref="5"/>
</evidence>
<evidence type="ECO:0000305" key="15"/>
<proteinExistence type="evidence at protein level"/>